<organism>
    <name type="scientific">Bos taurus</name>
    <name type="common">Bovine</name>
    <dbReference type="NCBI Taxonomy" id="9913"/>
    <lineage>
        <taxon>Eukaryota</taxon>
        <taxon>Metazoa</taxon>
        <taxon>Chordata</taxon>
        <taxon>Craniata</taxon>
        <taxon>Vertebrata</taxon>
        <taxon>Euteleostomi</taxon>
        <taxon>Mammalia</taxon>
        <taxon>Eutheria</taxon>
        <taxon>Laurasiatheria</taxon>
        <taxon>Artiodactyla</taxon>
        <taxon>Ruminantia</taxon>
        <taxon>Pecora</taxon>
        <taxon>Bovidae</taxon>
        <taxon>Bovinae</taxon>
        <taxon>Bos</taxon>
    </lineage>
</organism>
<comment type="function">
    <text>Appears to regulate cell growth through interactions with the extracellular matrix and cytokines. Binds calcium and copper, several types of collagen, albumin, thrombospondin, PDGF and cell membranes. There are two calcium binding sites; an acidic domain that binds 5 to 8 Ca(2+) with a low affinity and an EF-hand loop that binds a Ca(2+) ion with a high affinity.</text>
</comment>
<comment type="subcellular location">
    <subcellularLocation>
        <location evidence="4">Secreted</location>
        <location evidence="4">Extracellular space</location>
        <location evidence="4">Extracellular matrix</location>
        <location evidence="4">Basement membrane</location>
    </subcellularLocation>
    <text evidence="1">In or around the basement membrane.</text>
</comment>
<comment type="developmental stage">
    <text>Expressed at high levels in tissues undergoing morphogenesis, remodeling and wound repair.</text>
</comment>
<comment type="similarity">
    <text evidence="6">Belongs to the SPARC family.</text>
</comment>
<name>SPRC_BOVIN</name>
<proteinExistence type="evidence at protein level"/>
<dbReference type="EMBL" id="J03233">
    <property type="protein sequence ID" value="AAA30678.1"/>
    <property type="molecule type" value="mRNA"/>
</dbReference>
<dbReference type="EMBL" id="BT030548">
    <property type="protein sequence ID" value="ABQ12988.1"/>
    <property type="molecule type" value="mRNA"/>
</dbReference>
<dbReference type="EMBL" id="BC107529">
    <property type="protein sequence ID" value="AAI07530.1"/>
    <property type="molecule type" value="mRNA"/>
</dbReference>
<dbReference type="EMBL" id="M18876">
    <property type="protein sequence ID" value="AAA51416.1"/>
    <property type="molecule type" value="Genomic_DNA"/>
</dbReference>
<dbReference type="EMBL" id="M18874">
    <property type="protein sequence ID" value="AAA51416.1"/>
    <property type="status" value="JOINED"/>
    <property type="molecule type" value="Genomic_DNA"/>
</dbReference>
<dbReference type="EMBL" id="M18875">
    <property type="protein sequence ID" value="AAA51416.1"/>
    <property type="status" value="JOINED"/>
    <property type="molecule type" value="Genomic_DNA"/>
</dbReference>
<dbReference type="EMBL" id="M31318">
    <property type="protein sequence ID" value="AAA30677.1"/>
    <property type="molecule type" value="mRNA"/>
</dbReference>
<dbReference type="PIR" id="A31333">
    <property type="entry name" value="GEBON"/>
</dbReference>
<dbReference type="RefSeq" id="NP_776889.1">
    <property type="nucleotide sequence ID" value="NM_174464.2"/>
</dbReference>
<dbReference type="RefSeq" id="XP_059743917.1">
    <property type="nucleotide sequence ID" value="XM_059887934.1"/>
</dbReference>
<dbReference type="SMR" id="P13213"/>
<dbReference type="CORUM" id="P13213"/>
<dbReference type="FunCoup" id="P13213">
    <property type="interactions" value="761"/>
</dbReference>
<dbReference type="STRING" id="9913.ENSBTAP00000065130"/>
<dbReference type="GlyCosmos" id="P13213">
    <property type="glycosylation" value="1 site, No reported glycans"/>
</dbReference>
<dbReference type="GlyGen" id="P13213">
    <property type="glycosylation" value="1 site"/>
</dbReference>
<dbReference type="PaxDb" id="9913-ENSBTAP00000019758"/>
<dbReference type="PeptideAtlas" id="P13213"/>
<dbReference type="GeneID" id="282077"/>
<dbReference type="KEGG" id="bta:282077"/>
<dbReference type="CTD" id="6678"/>
<dbReference type="VEuPathDB" id="HostDB:ENSBTAG00000014835"/>
<dbReference type="eggNOG" id="KOG4004">
    <property type="taxonomic scope" value="Eukaryota"/>
</dbReference>
<dbReference type="HOGENOM" id="CLU_047416_0_0_1"/>
<dbReference type="InParanoid" id="P13213"/>
<dbReference type="OrthoDB" id="9972865at2759"/>
<dbReference type="TreeFam" id="TF319356"/>
<dbReference type="Reactome" id="R-BTA-114608">
    <property type="pathway name" value="Platelet degranulation"/>
</dbReference>
<dbReference type="Reactome" id="R-BTA-3000178">
    <property type="pathway name" value="ECM proteoglycans"/>
</dbReference>
<dbReference type="Reactome" id="R-BTA-3000497">
    <property type="pathway name" value="Scavenging by Class H Receptors"/>
</dbReference>
<dbReference type="Proteomes" id="UP000009136">
    <property type="component" value="Chromosome 7"/>
</dbReference>
<dbReference type="Bgee" id="ENSBTAG00000014835">
    <property type="expression patterns" value="Expressed in uterine cervix and 102 other cell types or tissues"/>
</dbReference>
<dbReference type="GO" id="GO:0005604">
    <property type="term" value="C:basement membrane"/>
    <property type="evidence" value="ECO:0007669"/>
    <property type="project" value="UniProtKB-SubCell"/>
</dbReference>
<dbReference type="GO" id="GO:0005615">
    <property type="term" value="C:extracellular space"/>
    <property type="evidence" value="ECO:0000318"/>
    <property type="project" value="GO_Central"/>
</dbReference>
<dbReference type="GO" id="GO:0005509">
    <property type="term" value="F:calcium ion binding"/>
    <property type="evidence" value="ECO:0000318"/>
    <property type="project" value="GO_Central"/>
</dbReference>
<dbReference type="GO" id="GO:0005518">
    <property type="term" value="F:collagen binding"/>
    <property type="evidence" value="ECO:0000318"/>
    <property type="project" value="GO_Central"/>
</dbReference>
<dbReference type="GO" id="GO:0050840">
    <property type="term" value="F:extracellular matrix binding"/>
    <property type="evidence" value="ECO:0000318"/>
    <property type="project" value="GO_Central"/>
</dbReference>
<dbReference type="GO" id="GO:0050807">
    <property type="term" value="P:regulation of synapse organization"/>
    <property type="evidence" value="ECO:0000318"/>
    <property type="project" value="GO_Central"/>
</dbReference>
<dbReference type="GO" id="GO:0048752">
    <property type="term" value="P:semicircular canal morphogenesis"/>
    <property type="evidence" value="ECO:0000318"/>
    <property type="project" value="GO_Central"/>
</dbReference>
<dbReference type="CDD" id="cd16231">
    <property type="entry name" value="EFh_SPARC_like"/>
    <property type="match status" value="1"/>
</dbReference>
<dbReference type="CDD" id="cd01328">
    <property type="entry name" value="FSL_SPARC"/>
    <property type="match status" value="1"/>
</dbReference>
<dbReference type="FunFam" id="1.10.238.10:FF:000068">
    <property type="entry name" value="SPARC isoform 1"/>
    <property type="match status" value="1"/>
</dbReference>
<dbReference type="FunFam" id="3.30.60.30:FF:000004">
    <property type="entry name" value="SPARC isoform 1"/>
    <property type="match status" value="1"/>
</dbReference>
<dbReference type="Gene3D" id="3.30.60.30">
    <property type="match status" value="1"/>
</dbReference>
<dbReference type="Gene3D" id="1.10.238.10">
    <property type="entry name" value="EF-hand"/>
    <property type="match status" value="1"/>
</dbReference>
<dbReference type="InterPro" id="IPR011992">
    <property type="entry name" value="EF-hand-dom_pair"/>
</dbReference>
<dbReference type="InterPro" id="IPR018247">
    <property type="entry name" value="EF_Hand_1_Ca_BS"/>
</dbReference>
<dbReference type="InterPro" id="IPR003645">
    <property type="entry name" value="Fol_N"/>
</dbReference>
<dbReference type="InterPro" id="IPR015369">
    <property type="entry name" value="Follistatin/Osteonectin_EGF"/>
</dbReference>
<dbReference type="InterPro" id="IPR002350">
    <property type="entry name" value="Kazal_dom"/>
</dbReference>
<dbReference type="InterPro" id="IPR036058">
    <property type="entry name" value="Kazal_dom_sf"/>
</dbReference>
<dbReference type="InterPro" id="IPR001999">
    <property type="entry name" value="Osteonectin_CS"/>
</dbReference>
<dbReference type="InterPro" id="IPR019577">
    <property type="entry name" value="SPARC/Testican_Ca-bd-dom"/>
</dbReference>
<dbReference type="InterPro" id="IPR037641">
    <property type="entry name" value="SPARC_FS"/>
</dbReference>
<dbReference type="PANTHER" id="PTHR13866:SF6">
    <property type="entry name" value="SPARC"/>
    <property type="match status" value="1"/>
</dbReference>
<dbReference type="PANTHER" id="PTHR13866">
    <property type="entry name" value="SPARC OSTEONECTIN"/>
    <property type="match status" value="1"/>
</dbReference>
<dbReference type="Pfam" id="PF09289">
    <property type="entry name" value="FOLN"/>
    <property type="match status" value="1"/>
</dbReference>
<dbReference type="Pfam" id="PF00050">
    <property type="entry name" value="Kazal_1"/>
    <property type="match status" value="1"/>
</dbReference>
<dbReference type="Pfam" id="PF10591">
    <property type="entry name" value="SPARC_Ca_bdg"/>
    <property type="match status" value="1"/>
</dbReference>
<dbReference type="SMART" id="SM00274">
    <property type="entry name" value="FOLN"/>
    <property type="match status" value="1"/>
</dbReference>
<dbReference type="SMART" id="SM00280">
    <property type="entry name" value="KAZAL"/>
    <property type="match status" value="1"/>
</dbReference>
<dbReference type="SUPFAM" id="SSF47473">
    <property type="entry name" value="EF-hand"/>
    <property type="match status" value="1"/>
</dbReference>
<dbReference type="SUPFAM" id="SSF57196">
    <property type="entry name" value="EGF/Laminin"/>
    <property type="match status" value="1"/>
</dbReference>
<dbReference type="SUPFAM" id="SSF100895">
    <property type="entry name" value="Kazal-type serine protease inhibitors"/>
    <property type="match status" value="1"/>
</dbReference>
<dbReference type="PROSITE" id="PS00018">
    <property type="entry name" value="EF_HAND_1"/>
    <property type="match status" value="1"/>
</dbReference>
<dbReference type="PROSITE" id="PS51465">
    <property type="entry name" value="KAZAL_2"/>
    <property type="match status" value="1"/>
</dbReference>
<dbReference type="PROSITE" id="PS00612">
    <property type="entry name" value="OSTEONECTIN_1"/>
    <property type="match status" value="1"/>
</dbReference>
<dbReference type="PROSITE" id="PS00613">
    <property type="entry name" value="OSTEONECTIN_2"/>
    <property type="match status" value="1"/>
</dbReference>
<accession>P13213</accession>
<accession>A5D9C9</accession>
<accession>Q3B7N5</accession>
<evidence type="ECO:0000250" key="1"/>
<evidence type="ECO:0000255" key="2">
    <source>
        <dbReference type="PROSITE-ProRule" id="PRU00798"/>
    </source>
</evidence>
<evidence type="ECO:0000255" key="3">
    <source>
        <dbReference type="PROSITE-ProRule" id="PRU10142"/>
    </source>
</evidence>
<evidence type="ECO:0000269" key="4">
    <source>
    </source>
</evidence>
<evidence type="ECO:0000269" key="5">
    <source>
    </source>
</evidence>
<evidence type="ECO:0000305" key="6"/>
<keyword id="KW-0084">Basement membrane</keyword>
<keyword id="KW-0106">Calcium</keyword>
<keyword id="KW-0186">Copper</keyword>
<keyword id="KW-0903">Direct protein sequencing</keyword>
<keyword id="KW-1015">Disulfide bond</keyword>
<keyword id="KW-0272">Extracellular matrix</keyword>
<keyword id="KW-0325">Glycoprotein</keyword>
<keyword id="KW-0479">Metal-binding</keyword>
<keyword id="KW-1185">Reference proteome</keyword>
<keyword id="KW-0964">Secreted</keyword>
<keyword id="KW-0732">Signal</keyword>
<reference key="1">
    <citation type="journal article" date="1988" name="Proc. Natl. Acad. Sci. U.S.A.">
        <title>Osteonectin cDNA sequence reveals potential binding regions for calcium and hydroxyapatite and shows homologies with both a basement membrane protein (SPARC) and a serine proteinase inhibitor (ovomucoid).</title>
        <authorList>
            <person name="Bolander M.E."/>
            <person name="Young M.F."/>
            <person name="Fisher L.W."/>
            <person name="Yamada Y."/>
            <person name="Termine J.D."/>
        </authorList>
    </citation>
    <scope>NUCLEOTIDE SEQUENCE [MRNA]</scope>
</reference>
<reference key="2">
    <citation type="journal article" date="2005" name="BMC Genomics">
        <title>Characterization of 954 bovine full-CDS cDNA sequences.</title>
        <authorList>
            <person name="Harhay G.P."/>
            <person name="Sonstegard T.S."/>
            <person name="Keele J.W."/>
            <person name="Heaton M.P."/>
            <person name="Clawson M.L."/>
            <person name="Snelling W.M."/>
            <person name="Wiedmann R.T."/>
            <person name="Van Tassell C.P."/>
            <person name="Smith T.P.L."/>
        </authorList>
    </citation>
    <scope>NUCLEOTIDE SEQUENCE [LARGE SCALE MRNA]</scope>
</reference>
<reference key="3">
    <citation type="submission" date="2005-10" db="EMBL/GenBank/DDBJ databases">
        <authorList>
            <consortium name="NIH - Mammalian Gene Collection (MGC) project"/>
        </authorList>
    </citation>
    <scope>NUCLEOTIDE SEQUENCE [LARGE SCALE MRNA]</scope>
    <source>
        <strain>Hereford</strain>
        <tissue>Fetal liver</tissue>
    </source>
</reference>
<reference key="4">
    <citation type="journal article" date="1988" name="Biochemistry">
        <title>Isolation of the osteonectin gene: evidence that a variable region of the osteonectin molecule is encoded within one exon.</title>
        <authorList>
            <person name="Findlay D.M."/>
            <person name="Fisher L.W."/>
            <person name="McQuillan C.I."/>
            <person name="Termine J.D."/>
            <person name="Young M.F."/>
        </authorList>
    </citation>
    <scope>NUCLEOTIDE SEQUENCE [GENOMIC DNA] OF 1-69</scope>
</reference>
<reference key="5">
    <citation type="journal article" date="1986" name="Nucleic Acids Res.">
        <title>Osteonectin mRNA: distribution in normal and transformed cells.</title>
        <authorList>
            <person name="Young M.F."/>
            <person name="Bolander M.E."/>
            <person name="Day A.A."/>
            <person name="Ramis C.I."/>
            <person name="Robey P.G."/>
            <person name="Yamada Y."/>
            <person name="Termine J.D."/>
        </authorList>
    </citation>
    <scope>NUCLEOTIDE SEQUENCE [MRNA] OF 18-36</scope>
</reference>
<reference key="6">
    <citation type="journal article" date="1988" name="Biochem. J.">
        <title>Characterization of porcine osteonectin extracted from foetal calvariae.</title>
        <authorList>
            <person name="Domenicucci C."/>
            <person name="Goldberg H.A."/>
            <person name="Hofmann T."/>
            <person name="Isenman D."/>
            <person name="Wasi S."/>
            <person name="Sodek J."/>
        </authorList>
    </citation>
    <scope>PROTEIN SEQUENCE OF 18-55</scope>
    <scope>CHARACTERIZATION</scope>
</reference>
<reference key="7">
    <citation type="journal article" date="1985" name="J. Biol. Chem.">
        <title>Isolation and characterization of native adult osteonectin.</title>
        <authorList>
            <person name="Romberg R.W."/>
            <person name="Werness P.G."/>
            <person name="Lollar P."/>
            <person name="Riggs B.L."/>
            <person name="Mann K.G."/>
        </authorList>
    </citation>
    <scope>PROTEIN SEQUENCE OF 19-36</scope>
    <scope>CALCIUM-BINDING</scope>
    <scope>SUBCELLULAR LOCATION</scope>
    <scope>CHARACTERIZATION</scope>
</reference>
<protein>
    <recommendedName>
        <fullName>SPARC</fullName>
    </recommendedName>
    <alternativeName>
        <fullName>Basement-membrane protein 40</fullName>
        <shortName>BM-40</shortName>
    </alternativeName>
    <alternativeName>
        <fullName>Osteonectin</fullName>
        <shortName>ON</shortName>
    </alternativeName>
    <alternativeName>
        <fullName>Secreted protein acidic and rich in cysteine</fullName>
    </alternativeName>
</protein>
<sequence>MRAWIFFLLCLAGRALAAPQQEALPDETEVVEETVAEVAEVPVGANPVQVEVGEFDDGAEETEEEVVAENPCQNHHCKHGKVCELDENNTPMCVCQDPTSCPAPIGEFEKVCSNDNKTFDSSCHFFATKCTLEGTKKGHKLHLDYIGPCKYIPPCLDSELTEFPLRMRDWLKNVLVTLYERDEDNNLLTEKQKLRVKKIHENEKRLEAGDHPVELLARDFEKNYNMYIFPVHWQFGQLDQHPIDGYLSHTELAPLRAPLIPMEHCTTRFFETCDLDNDKYIALDEWAGCFGIKEKDIDKDLVI</sequence>
<feature type="signal peptide" evidence="5">
    <location>
        <begin position="1"/>
        <end position="17"/>
    </location>
</feature>
<feature type="chain" id="PRO_0000020303" description="SPARC">
    <location>
        <begin position="18"/>
        <end position="303"/>
    </location>
</feature>
<feature type="domain" description="Follistatin-like">
    <location>
        <begin position="71"/>
        <end position="93"/>
    </location>
</feature>
<feature type="domain" description="Kazal-like" evidence="2">
    <location>
        <begin position="89"/>
        <end position="151"/>
    </location>
</feature>
<feature type="domain" description="EF-hand">
    <location>
        <begin position="261"/>
        <end position="296"/>
    </location>
</feature>
<feature type="binding site" evidence="3">
    <location>
        <position position="274"/>
    </location>
    <ligand>
        <name>Ca(2+)</name>
        <dbReference type="ChEBI" id="CHEBI:29108"/>
    </ligand>
</feature>
<feature type="binding site" evidence="3">
    <location>
        <position position="276"/>
    </location>
    <ligand>
        <name>Ca(2+)</name>
        <dbReference type="ChEBI" id="CHEBI:29108"/>
    </ligand>
</feature>
<feature type="binding site" evidence="3">
    <location>
        <position position="278"/>
    </location>
    <ligand>
        <name>Ca(2+)</name>
        <dbReference type="ChEBI" id="CHEBI:29108"/>
    </ligand>
</feature>
<feature type="binding site" evidence="3">
    <location>
        <position position="280"/>
    </location>
    <ligand>
        <name>Ca(2+)</name>
        <dbReference type="ChEBI" id="CHEBI:29108"/>
    </ligand>
</feature>
<feature type="binding site" evidence="3">
    <location>
        <position position="285"/>
    </location>
    <ligand>
        <name>Ca(2+)</name>
        <dbReference type="ChEBI" id="CHEBI:29108"/>
    </ligand>
</feature>
<feature type="glycosylation site" description="N-linked (GlcNAc...) asparagine" evidence="6">
    <location>
        <position position="116"/>
    </location>
</feature>
<feature type="disulfide bond" evidence="2">
    <location>
        <begin position="72"/>
        <end position="83"/>
    </location>
</feature>
<feature type="disulfide bond" evidence="2">
    <location>
        <begin position="77"/>
        <end position="93"/>
    </location>
</feature>
<feature type="disulfide bond" evidence="2">
    <location>
        <begin position="95"/>
        <end position="130"/>
    </location>
</feature>
<feature type="disulfide bond" evidence="2">
    <location>
        <begin position="101"/>
        <end position="123"/>
    </location>
</feature>
<feature type="disulfide bond" evidence="2">
    <location>
        <begin position="112"/>
        <end position="149"/>
    </location>
</feature>
<feature type="disulfide bond" evidence="2">
    <location>
        <begin position="155"/>
        <end position="265"/>
    </location>
</feature>
<feature type="disulfide bond" evidence="2">
    <location>
        <begin position="273"/>
        <end position="289"/>
    </location>
</feature>
<feature type="sequence conflict" description="In Ref. 1; AAA30678." evidence="6" ref="1">
    <original>G</original>
    <variation>GC</variation>
    <location>
        <position position="209"/>
    </location>
</feature>
<gene>
    <name type="primary">SPARC</name>
</gene>